<comment type="function">
    <text evidence="1">The PI(3,5)P2 regulatory complex regulates both the synthesis and turnover of phosphatidylinositol 3,5-bisphosphate (PtdIns(3,5)P2). Necessary for proper vacuole morphology. Plays an important role in osmotically-induced vacuole fragmentation. Required for cytoplasm to vacuole transport (Cvt) vesicle formation, pexophagy and starvation-induced autophagy. Involved in correct ATG9 trafficking to the pre-autophagosomal structure. Might also be involved in premeiotic DNA replication (By similarity).</text>
</comment>
<comment type="subunit">
    <text evidence="1">Component of the PI(3,5)P2 regulatory complex.</text>
</comment>
<comment type="subcellular location">
    <subcellularLocation>
        <location evidence="1">Preautophagosomal structure membrane</location>
        <topology evidence="1">Peripheral membrane protein</topology>
    </subcellularLocation>
    <subcellularLocation>
        <location evidence="1">Vacuole membrane</location>
        <topology evidence="1">Peripheral membrane protein</topology>
    </subcellularLocation>
    <subcellularLocation>
        <location evidence="1">Endosome membrane</location>
        <topology evidence="1">Peripheral membrane protein</topology>
    </subcellularLocation>
</comment>
<comment type="domain">
    <text evidence="1">The N-terminus might form a beta-propeller domain involved in specific binding to phosphatidylinositol 3,5-bisphosphate (PIP2), leading to the association of the protein to the membrane.</text>
</comment>
<comment type="domain">
    <text evidence="2">The L/FRRG motif is essential for the cytoplasm to vacuole transport (Cvt) pathway, for the recruitment of ATG8 and ATG16 to the PAS in nutrient-rich medium, and for its recruitment to and dissociation from the PAS under starvation conditions.</text>
</comment>
<comment type="similarity">
    <text evidence="4">Belongs to the WD repeat PROPPIN family.</text>
</comment>
<feature type="chain" id="PRO_0000318000" description="Autophagy-related protein 18">
    <location>
        <begin position="1"/>
        <end position="394"/>
    </location>
</feature>
<feature type="repeat" description="WD 1">
    <location>
        <begin position="4"/>
        <end position="42"/>
    </location>
</feature>
<feature type="repeat" description="WD 2">
    <location>
        <begin position="191"/>
        <end position="231"/>
    </location>
</feature>
<feature type="repeat" description="WD 3">
    <location>
        <begin position="236"/>
        <end position="275"/>
    </location>
</feature>
<feature type="region of interest" description="Disordered" evidence="3">
    <location>
        <begin position="146"/>
        <end position="165"/>
    </location>
</feature>
<feature type="region of interest" description="Disordered" evidence="3">
    <location>
        <begin position="274"/>
        <end position="342"/>
    </location>
</feature>
<feature type="short sequence motif" description="L/FRRG motif" evidence="2">
    <location>
        <begin position="232"/>
        <end position="236"/>
    </location>
</feature>
<feature type="compositionally biased region" description="Basic and acidic residues" evidence="3">
    <location>
        <begin position="148"/>
        <end position="158"/>
    </location>
</feature>
<feature type="compositionally biased region" description="Low complexity" evidence="3">
    <location>
        <begin position="302"/>
        <end position="312"/>
    </location>
</feature>
<feature type="compositionally biased region" description="Polar residues" evidence="3">
    <location>
        <begin position="331"/>
        <end position="342"/>
    </location>
</feature>
<name>ATG18_CHAGB</name>
<reference key="1">
    <citation type="journal article" date="2015" name="Genome Announc.">
        <title>Draft genome sequence of the cellulolytic fungus Chaetomium globosum.</title>
        <authorList>
            <person name="Cuomo C.A."/>
            <person name="Untereiner W.A."/>
            <person name="Ma L.-J."/>
            <person name="Grabherr M."/>
            <person name="Birren B.W."/>
        </authorList>
    </citation>
    <scope>NUCLEOTIDE SEQUENCE [LARGE SCALE GENOMIC DNA]</scope>
    <source>
        <strain>ATCC 6205 / CBS 148.51 / DSM 1962 / NBRC 6347 / NRRL 1970</strain>
    </source>
</reference>
<keyword id="KW-0072">Autophagy</keyword>
<keyword id="KW-0967">Endosome</keyword>
<keyword id="KW-0472">Membrane</keyword>
<keyword id="KW-0653">Protein transport</keyword>
<keyword id="KW-1185">Reference proteome</keyword>
<keyword id="KW-0677">Repeat</keyword>
<keyword id="KW-0813">Transport</keyword>
<keyword id="KW-0926">Vacuole</keyword>
<keyword id="KW-0853">WD repeat</keyword>
<protein>
    <recommendedName>
        <fullName>Autophagy-related protein 18</fullName>
    </recommendedName>
</protein>
<evidence type="ECO:0000250" key="1"/>
<evidence type="ECO:0000250" key="2">
    <source>
        <dbReference type="UniProtKB" id="P43601"/>
    </source>
</evidence>
<evidence type="ECO:0000256" key="3">
    <source>
        <dbReference type="SAM" id="MobiDB-lite"/>
    </source>
</evidence>
<evidence type="ECO:0000305" key="4"/>
<dbReference type="EMBL" id="CH408033">
    <property type="protein sequence ID" value="EAQ86911.1"/>
    <property type="molecule type" value="Genomic_DNA"/>
</dbReference>
<dbReference type="RefSeq" id="XP_001225820.1">
    <property type="nucleotide sequence ID" value="XM_001225819.1"/>
</dbReference>
<dbReference type="SMR" id="Q2GV40"/>
<dbReference type="FunCoup" id="Q2GV40">
    <property type="interactions" value="503"/>
</dbReference>
<dbReference type="STRING" id="306901.Q2GV40"/>
<dbReference type="GeneID" id="4393544"/>
<dbReference type="VEuPathDB" id="FungiDB:CHGG_08164"/>
<dbReference type="eggNOG" id="KOG2110">
    <property type="taxonomic scope" value="Eukaryota"/>
</dbReference>
<dbReference type="HOGENOM" id="CLU_025895_5_2_1"/>
<dbReference type="InParanoid" id="Q2GV40"/>
<dbReference type="OMA" id="ATWGGMF"/>
<dbReference type="OrthoDB" id="1667587at2759"/>
<dbReference type="Proteomes" id="UP000001056">
    <property type="component" value="Unassembled WGS sequence"/>
</dbReference>
<dbReference type="GO" id="GO:0010008">
    <property type="term" value="C:endosome membrane"/>
    <property type="evidence" value="ECO:0007669"/>
    <property type="project" value="UniProtKB-SubCell"/>
</dbReference>
<dbReference type="GO" id="GO:0034045">
    <property type="term" value="C:phagophore assembly site membrane"/>
    <property type="evidence" value="ECO:0007669"/>
    <property type="project" value="UniProtKB-SubCell"/>
</dbReference>
<dbReference type="GO" id="GO:0005774">
    <property type="term" value="C:vacuolar membrane"/>
    <property type="evidence" value="ECO:0007669"/>
    <property type="project" value="UniProtKB-SubCell"/>
</dbReference>
<dbReference type="GO" id="GO:0006914">
    <property type="term" value="P:autophagy"/>
    <property type="evidence" value="ECO:0007669"/>
    <property type="project" value="UniProtKB-KW"/>
</dbReference>
<dbReference type="GO" id="GO:0015031">
    <property type="term" value="P:protein transport"/>
    <property type="evidence" value="ECO:0007669"/>
    <property type="project" value="UniProtKB-KW"/>
</dbReference>
<dbReference type="Gene3D" id="2.130.10.10">
    <property type="entry name" value="YVTN repeat-like/Quinoprotein amine dehydrogenase"/>
    <property type="match status" value="1"/>
</dbReference>
<dbReference type="InterPro" id="IPR048720">
    <property type="entry name" value="PROPPIN"/>
</dbReference>
<dbReference type="InterPro" id="IPR015943">
    <property type="entry name" value="WD40/YVTN_repeat-like_dom_sf"/>
</dbReference>
<dbReference type="InterPro" id="IPR036322">
    <property type="entry name" value="WD40_repeat_dom_sf"/>
</dbReference>
<dbReference type="InterPro" id="IPR001680">
    <property type="entry name" value="WD40_rpt"/>
</dbReference>
<dbReference type="PANTHER" id="PTHR11227">
    <property type="entry name" value="WD-REPEAT PROTEIN INTERACTING WITH PHOSPHOINOSIDES WIPI -RELATED"/>
    <property type="match status" value="1"/>
</dbReference>
<dbReference type="Pfam" id="PF21032">
    <property type="entry name" value="PROPPIN"/>
    <property type="match status" value="2"/>
</dbReference>
<dbReference type="SMART" id="SM00320">
    <property type="entry name" value="WD40"/>
    <property type="match status" value="2"/>
</dbReference>
<dbReference type="SUPFAM" id="SSF50978">
    <property type="entry name" value="WD40 repeat-like"/>
    <property type="match status" value="1"/>
</dbReference>
<gene>
    <name type="primary">ATG18</name>
    <name type="ORF">CHGG_08164</name>
</gene>
<proteinExistence type="inferred from homology"/>
<sequence>MADLSNTKLNYVTFNQDHSCLAVATSRGFRIYHTDPFSKIFNSDEGNVTIIEMLFSTSLVAMVRSPRHLVIQNTKRGSIICDLTFPTAVLAVRLNRKTLAVVLEEEIYVYDIGNMALKHTIATSPNPNAIFALSPMSDRSYIAYPMPKPREDQGERRPAHAPPLSEYVPPTSGALMVFDTTAGKAVNVIEAHKMPLCCIALNHEGTKVATASERGTIVRVHSVPEGHKLFEFRRGTIPSTIYNMSFNLSSTLLCVSSSSETVHIFRLASAQNANAGGAGPAALETPGSPRANRWSRSKSIDGSEYSPSGDSDSSPRGETPEAGPSGPSAARRQSGTFGSMLRRSSQIVSRSVAGAVVPYLPQSVAEMWEPQRDFASVKIPKPTNAGDALLGPCL</sequence>
<accession>Q2GV40</accession>
<organism>
    <name type="scientific">Chaetomium globosum (strain ATCC 6205 / CBS 148.51 / DSM 1962 / NBRC 6347 / NRRL 1970)</name>
    <name type="common">Soil fungus</name>
    <dbReference type="NCBI Taxonomy" id="306901"/>
    <lineage>
        <taxon>Eukaryota</taxon>
        <taxon>Fungi</taxon>
        <taxon>Dikarya</taxon>
        <taxon>Ascomycota</taxon>
        <taxon>Pezizomycotina</taxon>
        <taxon>Sordariomycetes</taxon>
        <taxon>Sordariomycetidae</taxon>
        <taxon>Sordariales</taxon>
        <taxon>Chaetomiaceae</taxon>
        <taxon>Chaetomium</taxon>
    </lineage>
</organism>